<name>ETR1_CANTR</name>
<gene>
    <name type="primary">ETR1</name>
</gene>
<keyword id="KW-0002">3D-structure</keyword>
<keyword id="KW-0903">Direct protein sequencing</keyword>
<keyword id="KW-0275">Fatty acid biosynthesis</keyword>
<keyword id="KW-0276">Fatty acid metabolism</keyword>
<keyword id="KW-0444">Lipid biosynthesis</keyword>
<keyword id="KW-0443">Lipid metabolism</keyword>
<keyword id="KW-0496">Mitochondrion</keyword>
<keyword id="KW-0521">NADP</keyword>
<keyword id="KW-0560">Oxidoreductase</keyword>
<keyword id="KW-0809">Transit peptide</keyword>
<protein>
    <recommendedName>
        <fullName evidence="6">Enoyl-[acyl-carrier-protein] reductase 1, mitochondrial</fullName>
        <ecNumber evidence="8">1.3.1.104</ecNumber>
    </recommendedName>
    <alternativeName>
        <fullName evidence="5">2-enoyl thioester reductase 1</fullName>
    </alternativeName>
</protein>
<dbReference type="EC" id="1.3.1.104" evidence="8"/>
<dbReference type="EMBL" id="U94997">
    <property type="protein sequence ID" value="AAL55472.1"/>
    <property type="molecule type" value="Genomic_DNA"/>
</dbReference>
<dbReference type="PDB" id="1GU7">
    <property type="method" value="X-ray"/>
    <property type="resolution" value="1.70 A"/>
    <property type="chains" value="A/B=23-386"/>
</dbReference>
<dbReference type="PDB" id="1GUF">
    <property type="method" value="X-ray"/>
    <property type="resolution" value="2.25 A"/>
    <property type="chains" value="A/B=23-386"/>
</dbReference>
<dbReference type="PDB" id="1GYR">
    <property type="method" value="X-ray"/>
    <property type="resolution" value="2.60 A"/>
    <property type="chains" value="A/B/C=23-386"/>
</dbReference>
<dbReference type="PDB" id="1N9G">
    <property type="method" value="X-ray"/>
    <property type="resolution" value="1.98 A"/>
    <property type="chains" value="B/D/E=1-386"/>
</dbReference>
<dbReference type="PDB" id="4W99">
    <property type="method" value="X-ray"/>
    <property type="resolution" value="2.00 A"/>
    <property type="chains" value="A/B=23-386"/>
</dbReference>
<dbReference type="PDB" id="4WAS">
    <property type="method" value="X-ray"/>
    <property type="resolution" value="1.70 A"/>
    <property type="chains" value="A/B/C=23-386"/>
</dbReference>
<dbReference type="PDB" id="5LB9">
    <property type="method" value="X-ray"/>
    <property type="resolution" value="2.10 A"/>
    <property type="chains" value="A/B=23-386"/>
</dbReference>
<dbReference type="PDB" id="5LBX">
    <property type="method" value="X-ray"/>
    <property type="resolution" value="2.50 A"/>
    <property type="chains" value="A/B=23-386"/>
</dbReference>
<dbReference type="PDBsum" id="1GU7"/>
<dbReference type="PDBsum" id="1GUF"/>
<dbReference type="PDBsum" id="1GYR"/>
<dbReference type="PDBsum" id="1N9G"/>
<dbReference type="PDBsum" id="4W99"/>
<dbReference type="PDBsum" id="4WAS"/>
<dbReference type="PDBsum" id="5LB9"/>
<dbReference type="PDBsum" id="5LBX"/>
<dbReference type="SMR" id="Q8WZM3"/>
<dbReference type="IntAct" id="Q8WZM3">
    <property type="interactions" value="1"/>
</dbReference>
<dbReference type="SwissLipids" id="SLP:000001783"/>
<dbReference type="VEuPathDB" id="FungiDB:CTMYA2_052270"/>
<dbReference type="VEuPathDB" id="FungiDB:CTRG_06166"/>
<dbReference type="EvolutionaryTrace" id="Q8WZM3"/>
<dbReference type="GO" id="GO:0005739">
    <property type="term" value="C:mitochondrion"/>
    <property type="evidence" value="ECO:0007669"/>
    <property type="project" value="UniProtKB-SubCell"/>
</dbReference>
<dbReference type="GO" id="GO:0141148">
    <property type="term" value="F:enoyl-[acyl-carrier-protein] reductase (NADPH) activity"/>
    <property type="evidence" value="ECO:0007669"/>
    <property type="project" value="UniProtKB-EC"/>
</dbReference>
<dbReference type="GO" id="GO:0019166">
    <property type="term" value="F:trans-2-enoyl-CoA reductase (NADPH) activity"/>
    <property type="evidence" value="ECO:0000314"/>
    <property type="project" value="UniProtKB"/>
</dbReference>
<dbReference type="GO" id="GO:0006633">
    <property type="term" value="P:fatty acid biosynthetic process"/>
    <property type="evidence" value="ECO:0007669"/>
    <property type="project" value="UniProtKB-KW"/>
</dbReference>
<dbReference type="GO" id="GO:0006631">
    <property type="term" value="P:fatty acid metabolic process"/>
    <property type="evidence" value="ECO:0000314"/>
    <property type="project" value="UniProtKB"/>
</dbReference>
<dbReference type="CDD" id="cd08290">
    <property type="entry name" value="ETR"/>
    <property type="match status" value="1"/>
</dbReference>
<dbReference type="FunFam" id="3.40.50.720:FF:000112">
    <property type="entry name" value="Enoyl-[acyl-carrier-protein] reductase 1, mitochondrial"/>
    <property type="match status" value="1"/>
</dbReference>
<dbReference type="FunFam" id="3.90.180.10:FF:000073">
    <property type="entry name" value="Enoyl-[acyl-carrier-protein] reductase 1, mitochondrial"/>
    <property type="match status" value="1"/>
</dbReference>
<dbReference type="Gene3D" id="3.90.180.10">
    <property type="entry name" value="Medium-chain alcohol dehydrogenases, catalytic domain"/>
    <property type="match status" value="1"/>
</dbReference>
<dbReference type="Gene3D" id="3.40.50.720">
    <property type="entry name" value="NAD(P)-binding Rossmann-like Domain"/>
    <property type="match status" value="1"/>
</dbReference>
<dbReference type="InterPro" id="IPR013149">
    <property type="entry name" value="ADH-like_C"/>
</dbReference>
<dbReference type="InterPro" id="IPR013154">
    <property type="entry name" value="ADH-like_N"/>
</dbReference>
<dbReference type="InterPro" id="IPR011032">
    <property type="entry name" value="GroES-like_sf"/>
</dbReference>
<dbReference type="InterPro" id="IPR051034">
    <property type="entry name" value="Mito_Enoyl-ACP_Reductase"/>
</dbReference>
<dbReference type="InterPro" id="IPR036291">
    <property type="entry name" value="NAD(P)-bd_dom_sf"/>
</dbReference>
<dbReference type="InterPro" id="IPR020843">
    <property type="entry name" value="PKS_ER"/>
</dbReference>
<dbReference type="PANTHER" id="PTHR43981">
    <property type="entry name" value="ENOYL-[ACYL-CARRIER-PROTEIN] REDUCTASE, MITOCHONDRIAL"/>
    <property type="match status" value="1"/>
</dbReference>
<dbReference type="PANTHER" id="PTHR43981:SF2">
    <property type="entry name" value="ENOYL-[ACYL-CARRIER-PROTEIN] REDUCTASE, MITOCHONDRIAL"/>
    <property type="match status" value="1"/>
</dbReference>
<dbReference type="Pfam" id="PF08240">
    <property type="entry name" value="ADH_N"/>
    <property type="match status" value="1"/>
</dbReference>
<dbReference type="Pfam" id="PF00107">
    <property type="entry name" value="ADH_zinc_N"/>
    <property type="match status" value="1"/>
</dbReference>
<dbReference type="SMART" id="SM00829">
    <property type="entry name" value="PKS_ER"/>
    <property type="match status" value="1"/>
</dbReference>
<dbReference type="SUPFAM" id="SSF50129">
    <property type="entry name" value="GroES-like"/>
    <property type="match status" value="1"/>
</dbReference>
<dbReference type="SUPFAM" id="SSF51735">
    <property type="entry name" value="NAD(P)-binding Rossmann-fold domains"/>
    <property type="match status" value="1"/>
</dbReference>
<organism>
    <name type="scientific">Candida tropicalis</name>
    <name type="common">Yeast</name>
    <dbReference type="NCBI Taxonomy" id="5482"/>
    <lineage>
        <taxon>Eukaryota</taxon>
        <taxon>Fungi</taxon>
        <taxon>Dikarya</taxon>
        <taxon>Ascomycota</taxon>
        <taxon>Saccharomycotina</taxon>
        <taxon>Pichiomycetes</taxon>
        <taxon>Debaryomycetaceae</taxon>
        <taxon>Candida/Lodderomyces clade</taxon>
        <taxon>Candida</taxon>
    </lineage>
</organism>
<reference key="1">
    <citation type="journal article" date="2001" name="Mol. Cell. Biol.">
        <title>Candida tropicalis Etr1p and Saccharomyces cerevisiae Ybr026p (Mrf1'p), 2-enoyl thioester reductases essential for mitochondrial respiratory competence.</title>
        <authorList>
            <person name="Torkko J.M."/>
            <person name="Koivuranta K.T."/>
            <person name="Miinalainen I.J."/>
            <person name="Yagi A.I."/>
            <person name="Schmitz W."/>
            <person name="Kastaniotis A.J."/>
            <person name="Airenne T.T."/>
            <person name="Gurvitz A."/>
            <person name="Hiltunen K.J."/>
        </authorList>
    </citation>
    <scope>NUCLEOTIDE SEQUENCE [GENOMIC DNA]</scope>
    <scope>PROTEIN SEQUENCE OF 23-29</scope>
    <scope>FUNCTION</scope>
    <scope>CATALYTIC ACTIVITY</scope>
    <scope>SUBUNIT</scope>
    <scope>SUBCELLULAR LOCATION</scope>
    <source>
        <strain>ATCC 20336 / pK233 / NCYC 997</strain>
    </source>
</reference>
<reference key="2">
    <citation type="journal article" date="2003" name="J. Biol. Chem.">
        <title>Candida tropicalis expresses two mitochondrial 2-enoyl thioester reductases that are able to form both homodimers and heterodimers.</title>
        <authorList>
            <person name="Torkko J.M."/>
            <person name="Koivuranta K.T."/>
            <person name="Kastaniotis A.J."/>
            <person name="Airenne T.T."/>
            <person name="Glumoff T."/>
            <person name="Ilves M."/>
            <person name="Hartig A."/>
            <person name="Gurvitz A."/>
            <person name="Hiltunen J.K."/>
        </authorList>
    </citation>
    <scope>X-RAY CRYSTALLOGRAPHY (1.98 ANGSTROMS) IN COMPLEX WITH NADP</scope>
    <scope>SUBUNIT</scope>
    <scope>INDUCTION BY OLEIC ACID</scope>
    <scope>CATALYTIC ACTIVITY</scope>
    <scope>FUNCTION</scope>
    <source>
        <strain>ATCC 20336 / pK233 / NCYC 997</strain>
    </source>
</reference>
<reference key="3">
    <citation type="journal article" date="2003" name="J. Mol. Biol.">
        <title>Structure-function analysis of enoyl thioester reductase involved in mitochondrial maintenance.</title>
        <authorList>
            <person name="Airenne T.T."/>
            <person name="Torkko J.M."/>
            <person name="Van den plas S."/>
            <person name="Sormunen R.T."/>
            <person name="Kastaniotis A.J."/>
            <person name="Wierenga R.K."/>
            <person name="Hiltunen J.K."/>
        </authorList>
    </citation>
    <scope>X-RAY CRYSTALLOGRAPHY (1.7 ANGSTROMS) IN COMPLEX WITH NADP</scope>
    <scope>MUTAGENESIS OF TYR-79</scope>
    <scope>FUNCTION</scope>
</reference>
<reference key="4">
    <citation type="journal article" date="2015" name="Nat. Chem. Biol.">
        <title>The use of ene adducts to study and engineer enoyl-thioester reductases.</title>
        <authorList>
            <person name="Rosenthal R.G."/>
            <person name="Voegeli B."/>
            <person name="Quade N."/>
            <person name="Capitani G."/>
            <person name="Kiefer P."/>
            <person name="Vorholt J.A."/>
            <person name="Ebert M.O."/>
            <person name="Erb T.J."/>
        </authorList>
    </citation>
    <scope>X-RAY CRYSTALLOGRAPHY (1.70 ANGSTROMS)</scope>
    <scope>ACTIVE SITE</scope>
</reference>
<evidence type="ECO:0000269" key="1">
    <source>
    </source>
</evidence>
<evidence type="ECO:0000269" key="2">
    <source>
    </source>
</evidence>
<evidence type="ECO:0000269" key="3">
    <source>
    </source>
</evidence>
<evidence type="ECO:0000269" key="4">
    <source>
    </source>
</evidence>
<evidence type="ECO:0000303" key="5">
    <source>
    </source>
</evidence>
<evidence type="ECO:0000305" key="6"/>
<evidence type="ECO:0000305" key="7">
    <source>
    </source>
</evidence>
<evidence type="ECO:0000305" key="8">
    <source>
    </source>
</evidence>
<evidence type="ECO:0007829" key="9">
    <source>
        <dbReference type="PDB" id="1GU7"/>
    </source>
</evidence>
<evidence type="ECO:0007829" key="10">
    <source>
        <dbReference type="PDB" id="1N9G"/>
    </source>
</evidence>
<evidence type="ECO:0007829" key="11">
    <source>
        <dbReference type="PDB" id="4WAS"/>
    </source>
</evidence>
<comment type="function">
    <text evidence="1 2 3">Catalyzes the NADPH-dependent reduction of trans-2-enoyl thioesters in mitochondrial fatty acid synthesis (fatty acid synthesis type II). Fatty acid chain elongation in mitochondria uses acyl carrier protein (ACP) as an acyl group carrier, but the enzyme accepts both ACP and CoA thioesters as substrates in vitro. Required for respiration and the maintenance of the mitochondrial compartment.</text>
</comment>
<comment type="catalytic activity">
    <reaction evidence="8">
        <text>a 2,3-saturated acyl-[ACP] + NADP(+) = a (2E)-enoyl-[ACP] + NADPH + H(+)</text>
        <dbReference type="Rhea" id="RHEA:22564"/>
        <dbReference type="Rhea" id="RHEA-COMP:9925"/>
        <dbReference type="Rhea" id="RHEA-COMP:9926"/>
        <dbReference type="ChEBI" id="CHEBI:15378"/>
        <dbReference type="ChEBI" id="CHEBI:57783"/>
        <dbReference type="ChEBI" id="CHEBI:58349"/>
        <dbReference type="ChEBI" id="CHEBI:78784"/>
        <dbReference type="ChEBI" id="CHEBI:78785"/>
        <dbReference type="EC" id="1.3.1.104"/>
    </reaction>
</comment>
<comment type="catalytic activity">
    <reaction evidence="1">
        <text>(2E,4E)-hexadienoyl-CoA + NADPH + H(+) = (4E)-hexenoyl-CoA + NADP(+)</text>
        <dbReference type="Rhea" id="RHEA:54908"/>
        <dbReference type="ChEBI" id="CHEBI:15378"/>
        <dbReference type="ChEBI" id="CHEBI:57783"/>
        <dbReference type="ChEBI" id="CHEBI:58349"/>
        <dbReference type="ChEBI" id="CHEBI:84788"/>
        <dbReference type="ChEBI" id="CHEBI:138404"/>
    </reaction>
    <physiologicalReaction direction="left-to-right" evidence="7">
        <dbReference type="Rhea" id="RHEA:54909"/>
    </physiologicalReaction>
</comment>
<comment type="catalytic activity">
    <reaction evidence="1">
        <text>(2E)-hexenoyl-CoA + NADPH + H(+) = hexanoyl-CoA + NADP(+)</text>
        <dbReference type="Rhea" id="RHEA:44956"/>
        <dbReference type="ChEBI" id="CHEBI:15378"/>
        <dbReference type="ChEBI" id="CHEBI:57783"/>
        <dbReference type="ChEBI" id="CHEBI:58349"/>
        <dbReference type="ChEBI" id="CHEBI:62077"/>
        <dbReference type="ChEBI" id="CHEBI:62620"/>
    </reaction>
    <physiologicalReaction direction="left-to-right" evidence="7">
        <dbReference type="Rhea" id="RHEA:44957"/>
    </physiologicalReaction>
</comment>
<comment type="subunit">
    <text evidence="1 2 3">Homodimer and heterodimer with ETR2.</text>
</comment>
<comment type="subcellular location">
    <subcellularLocation>
        <location evidence="1">Mitochondrion</location>
    </subcellularLocation>
</comment>
<comment type="induction">
    <text evidence="3">Up-regulated by growth on oleic acid.</text>
</comment>
<comment type="similarity">
    <text evidence="6">Belongs to the zinc-containing alcohol dehydrogenase family. Quinone oxidoreductase subfamily.</text>
</comment>
<proteinExistence type="evidence at protein level"/>
<accession>Q8WZM3</accession>
<feature type="transit peptide" description="Mitochondrion" evidence="1">
    <location>
        <begin position="1"/>
        <end position="22"/>
    </location>
</feature>
<feature type="chain" id="PRO_0000000898" description="Enoyl-[acyl-carrier-protein] reductase 1, mitochondrial">
    <location>
        <begin position="23"/>
        <end position="386"/>
    </location>
</feature>
<feature type="active site" description="Proton donor" evidence="4">
    <location>
        <position position="79"/>
    </location>
</feature>
<feature type="binding site" evidence="2 3">
    <location>
        <position position="172"/>
    </location>
    <ligand>
        <name>NADP(+)</name>
        <dbReference type="ChEBI" id="CHEBI:58349"/>
    </ligand>
</feature>
<feature type="binding site" evidence="2 3">
    <location>
        <begin position="199"/>
        <end position="202"/>
    </location>
    <ligand>
        <name>NADP(+)</name>
        <dbReference type="ChEBI" id="CHEBI:58349"/>
    </ligand>
</feature>
<feature type="binding site" evidence="2 3">
    <location>
        <begin position="222"/>
        <end position="224"/>
    </location>
    <ligand>
        <name>NADP(+)</name>
        <dbReference type="ChEBI" id="CHEBI:58349"/>
    </ligand>
</feature>
<feature type="binding site" evidence="2 3">
    <location>
        <begin position="296"/>
        <end position="299"/>
    </location>
    <ligand>
        <name>NADP(+)</name>
        <dbReference type="ChEBI" id="CHEBI:58349"/>
    </ligand>
</feature>
<feature type="binding site" evidence="2 3">
    <location>
        <begin position="321"/>
        <end position="323"/>
    </location>
    <ligand>
        <name>NADP(+)</name>
        <dbReference type="ChEBI" id="CHEBI:58349"/>
    </ligand>
</feature>
<feature type="binding site" evidence="2 3">
    <location>
        <position position="381"/>
    </location>
    <ligand>
        <name>NADP(+)</name>
        <dbReference type="ChEBI" id="CHEBI:58349"/>
    </ligand>
</feature>
<feature type="mutagenesis site" description="0.1% of catalytic activity." evidence="2">
    <original>Y</original>
    <variation>N</variation>
    <location>
        <position position="79"/>
    </location>
</feature>
<feature type="strand" evidence="9">
    <location>
        <begin position="24"/>
        <end position="33"/>
    </location>
</feature>
<feature type="helix" evidence="9">
    <location>
        <begin position="37"/>
        <end position="40"/>
    </location>
</feature>
<feature type="strand" evidence="9">
    <location>
        <begin position="42"/>
        <end position="48"/>
    </location>
</feature>
<feature type="strand" evidence="9">
    <location>
        <begin position="57"/>
        <end position="67"/>
    </location>
</feature>
<feature type="helix" evidence="9">
    <location>
        <begin position="69"/>
        <end position="76"/>
    </location>
</feature>
<feature type="strand" evidence="9">
    <location>
        <begin position="95"/>
        <end position="97"/>
    </location>
</feature>
<feature type="strand" evidence="9">
    <location>
        <begin position="103"/>
        <end position="109"/>
    </location>
</feature>
<feature type="strand" evidence="9">
    <location>
        <begin position="121"/>
        <end position="127"/>
    </location>
</feature>
<feature type="strand" evidence="9">
    <location>
        <begin position="132"/>
        <end position="139"/>
    </location>
</feature>
<feature type="helix" evidence="9">
    <location>
        <begin position="140"/>
        <end position="142"/>
    </location>
</feature>
<feature type="strand" evidence="9">
    <location>
        <begin position="143"/>
        <end position="146"/>
    </location>
</feature>
<feature type="helix" evidence="9">
    <location>
        <begin position="149"/>
        <end position="154"/>
    </location>
</feature>
<feature type="helix" evidence="9">
    <location>
        <begin position="163"/>
        <end position="167"/>
    </location>
</feature>
<feature type="strand" evidence="11">
    <location>
        <begin position="169"/>
        <end position="171"/>
    </location>
</feature>
<feature type="helix" evidence="9">
    <location>
        <begin position="172"/>
        <end position="181"/>
    </location>
</feature>
<feature type="strand" evidence="9">
    <location>
        <begin position="182"/>
        <end position="184"/>
    </location>
</feature>
<feature type="turn" evidence="9">
    <location>
        <begin position="188"/>
        <end position="190"/>
    </location>
</feature>
<feature type="strand" evidence="9">
    <location>
        <begin position="192"/>
        <end position="196"/>
    </location>
</feature>
<feature type="helix" evidence="9">
    <location>
        <begin position="201"/>
        <end position="213"/>
    </location>
</feature>
<feature type="strand" evidence="9">
    <location>
        <begin position="216"/>
        <end position="221"/>
    </location>
</feature>
<feature type="helix" evidence="9">
    <location>
        <begin position="227"/>
        <end position="237"/>
    </location>
</feature>
<feature type="strand" evidence="9">
    <location>
        <begin position="240"/>
        <end position="244"/>
    </location>
</feature>
<feature type="helix" evidence="9">
    <location>
        <begin position="245"/>
        <end position="249"/>
    </location>
</feature>
<feature type="helix" evidence="9">
    <location>
        <begin position="251"/>
        <end position="253"/>
    </location>
</feature>
<feature type="helix" evidence="9">
    <location>
        <begin position="254"/>
        <end position="264"/>
    </location>
</feature>
<feature type="strand" evidence="9">
    <location>
        <begin position="268"/>
        <end position="275"/>
    </location>
</feature>
<feature type="helix" evidence="9">
    <location>
        <begin position="277"/>
        <end position="285"/>
    </location>
</feature>
<feature type="strand" evidence="9">
    <location>
        <begin position="292"/>
        <end position="295"/>
    </location>
</feature>
<feature type="strand" evidence="10">
    <location>
        <begin position="299"/>
        <end position="301"/>
    </location>
</feature>
<feature type="strand" evidence="9">
    <location>
        <begin position="304"/>
        <end position="306"/>
    </location>
</feature>
<feature type="helix" evidence="9">
    <location>
        <begin position="308"/>
        <end position="313"/>
    </location>
</feature>
<feature type="strand" evidence="9">
    <location>
        <begin position="317"/>
        <end position="320"/>
    </location>
</feature>
<feature type="helix" evidence="9">
    <location>
        <begin position="323"/>
        <end position="327"/>
    </location>
</feature>
<feature type="helix" evidence="9">
    <location>
        <begin position="331"/>
        <end position="346"/>
    </location>
</feature>
<feature type="strand" evidence="9">
    <location>
        <begin position="356"/>
        <end position="359"/>
    </location>
</feature>
<feature type="strand" evidence="9">
    <location>
        <begin position="362"/>
        <end position="364"/>
    </location>
</feature>
<feature type="helix" evidence="9">
    <location>
        <begin position="366"/>
        <end position="375"/>
    </location>
</feature>
<feature type="helix" evidence="9">
    <location>
        <begin position="377"/>
        <end position="379"/>
    </location>
</feature>
<feature type="strand" evidence="9">
    <location>
        <begin position="382"/>
        <end position="385"/>
    </location>
</feature>
<sequence>MYSVLKQSIRPRLLATHNQFRTMITAQAVLYTQHGEPKDVLFTQSFEIDDDNLAPNEVIVKTLGSPVNPSDINQIQGVYPSKPAKTTGFGTTEPAAPCGNEGLFEVIKVGSNVSSLEAGDWVIPSHVNFGTWRTHALGNDDDFIKLPNPAQSKANGKPNGLTINQGATISVNPLTAYLMLTHYVKLTPGKDWFIQNGGTSAVGKYASQIGKLLNFNSISVIRDRPNLDEVVASLKELGATQVITEDQNNSREFGPTIKEWIKQSGGEAKLALNCVGGKSSTGIARKLNNNGLMLTYGGMSFQPVTIPTSLYIFKNFTSAGFWVTELLKNNKELKTSTLNQIIAWYEEGKLTDAKSIETLYDGTKPLHELYQDGVANSKDGKQLITY</sequence>